<accession>P56259</accession>
<accession>Q2M885</accession>
<sequence length="149" mass="16873">MAINFSPKVGEILECNFGNYPVSQNGPFSTTYYDGRIPPEMIKNRLVVVLNGKINGNACIVVPLSTTRDQDKLKRGMHVEIASNVINDLQFFDQQIRWAKADLVQQVSRNRLNRARTYRGYLNQCLPHELVADIQRAVIKSINAISLIN</sequence>
<protein>
    <recommendedName>
        <fullName>Putative uncharacterized protein YifN</fullName>
    </recommendedName>
</protein>
<organism>
    <name type="scientific">Escherichia coli (strain K12)</name>
    <dbReference type="NCBI Taxonomy" id="83333"/>
    <lineage>
        <taxon>Bacteria</taxon>
        <taxon>Pseudomonadati</taxon>
        <taxon>Pseudomonadota</taxon>
        <taxon>Gammaproteobacteria</taxon>
        <taxon>Enterobacterales</taxon>
        <taxon>Enterobacteriaceae</taxon>
        <taxon>Escherichia</taxon>
    </lineage>
</organism>
<name>YIFN_ECOLI</name>
<dbReference type="EMBL" id="M87049">
    <property type="status" value="NOT_ANNOTATED_CDS"/>
    <property type="molecule type" value="Genomic_DNA"/>
</dbReference>
<dbReference type="EMBL" id="U00096">
    <property type="status" value="NOT_ANNOTATED_CDS"/>
    <property type="molecule type" value="Genomic_DNA"/>
</dbReference>
<dbReference type="EMBL" id="AP009048">
    <property type="protein sequence ID" value="BAE77521.1"/>
    <property type="status" value="ALT_FRAME"/>
    <property type="molecule type" value="Genomic_DNA"/>
</dbReference>
<dbReference type="PIR" id="C65181">
    <property type="entry name" value="C65181"/>
</dbReference>
<dbReference type="PIR" id="D65181">
    <property type="entry name" value="D65181"/>
</dbReference>
<dbReference type="SMR" id="P56259"/>
<dbReference type="BioGRID" id="4259699">
    <property type="interactions" value="4"/>
</dbReference>
<dbReference type="FunCoup" id="P56259">
    <property type="interactions" value="5"/>
</dbReference>
<dbReference type="IntAct" id="P56259">
    <property type="interactions" value="4"/>
</dbReference>
<dbReference type="KEGG" id="ecj:JW3749"/>
<dbReference type="EchoBASE" id="EB4085"/>
<dbReference type="eggNOG" id="COG3692">
    <property type="taxonomic scope" value="Bacteria"/>
</dbReference>
<dbReference type="HOGENOM" id="CLU_141537_1_0_6"/>
<dbReference type="InParanoid" id="P56259"/>
<dbReference type="Proteomes" id="UP000000625">
    <property type="component" value="Chromosome"/>
</dbReference>
<dbReference type="GO" id="GO:0003677">
    <property type="term" value="F:DNA binding"/>
    <property type="evidence" value="ECO:0007669"/>
    <property type="project" value="InterPro"/>
</dbReference>
<dbReference type="Gene3D" id="2.30.30.110">
    <property type="match status" value="1"/>
</dbReference>
<dbReference type="InterPro" id="IPR003477">
    <property type="entry name" value="PemK-like"/>
</dbReference>
<dbReference type="InterPro" id="IPR011067">
    <property type="entry name" value="Plasmid_toxin/cell-grow_inhib"/>
</dbReference>
<dbReference type="Pfam" id="PF02452">
    <property type="entry name" value="PemK_toxin"/>
    <property type="match status" value="1"/>
</dbReference>
<evidence type="ECO:0000305" key="1"/>
<reference key="1">
    <citation type="journal article" date="1992" name="Science">
        <title>Analysis of the Escherichia coli genome: DNA sequence of the region from 84.5 to 86.5 minutes.</title>
        <authorList>
            <person name="Daniels D.L."/>
            <person name="Plunkett G. III"/>
            <person name="Burland V.D."/>
            <person name="Blattner F.R."/>
        </authorList>
    </citation>
    <scope>NUCLEOTIDE SEQUENCE [LARGE SCALE GENOMIC DNA]</scope>
    <source>
        <strain>K12 / MG1655 / ATCC 47076</strain>
    </source>
</reference>
<reference key="2">
    <citation type="journal article" date="1997" name="Science">
        <title>The complete genome sequence of Escherichia coli K-12.</title>
        <authorList>
            <person name="Blattner F.R."/>
            <person name="Plunkett G. III"/>
            <person name="Bloch C.A."/>
            <person name="Perna N.T."/>
            <person name="Burland V."/>
            <person name="Riley M."/>
            <person name="Collado-Vides J."/>
            <person name="Glasner J.D."/>
            <person name="Rode C.K."/>
            <person name="Mayhew G.F."/>
            <person name="Gregor J."/>
            <person name="Davis N.W."/>
            <person name="Kirkpatrick H.A."/>
            <person name="Goeden M.A."/>
            <person name="Rose D.J."/>
            <person name="Mau B."/>
            <person name="Shao Y."/>
        </authorList>
    </citation>
    <scope>NUCLEOTIDE SEQUENCE [LARGE SCALE GENOMIC DNA]</scope>
    <scope>SEQUENCE REVISION</scope>
    <source>
        <strain>K12 / MG1655 / ATCC 47076</strain>
    </source>
</reference>
<reference key="3">
    <citation type="journal article" date="2006" name="Mol. Syst. Biol.">
        <title>Highly accurate genome sequences of Escherichia coli K-12 strains MG1655 and W3110.</title>
        <authorList>
            <person name="Hayashi K."/>
            <person name="Morooka N."/>
            <person name="Yamamoto Y."/>
            <person name="Fujita K."/>
            <person name="Isono K."/>
            <person name="Choi S."/>
            <person name="Ohtsubo E."/>
            <person name="Baba T."/>
            <person name="Wanner B.L."/>
            <person name="Mori H."/>
            <person name="Horiuchi T."/>
        </authorList>
    </citation>
    <scope>NUCLEOTIDE SEQUENCE [LARGE SCALE GENOMIC DNA]</scope>
    <source>
        <strain>K12 / W3110 / ATCC 27325 / DSM 5911</strain>
    </source>
</reference>
<reference key="4">
    <citation type="unpublished observations" date="1997-12">
        <authorList>
            <person name="Rudd K.E."/>
        </authorList>
    </citation>
    <scope>CONCEPTUAL TRANSLATION</scope>
</reference>
<gene>
    <name type="primary">yifN</name>
    <name type="ordered locus">b3777</name>
    <name type="ordered locus">JW3749</name>
    <name type="ORF">b3776</name>
</gene>
<keyword id="KW-1185">Reference proteome</keyword>
<proteinExistence type="uncertain"/>
<comment type="caution">
    <text evidence="1">Could be the product of a pseudogene.</text>
</comment>
<comment type="sequence caution" evidence="1">
    <conflict type="frameshift">
        <sequence resource="EMBL-CDS" id="BAE77521"/>
    </conflict>
</comment>
<comment type="sequence caution" evidence="1">
    <conflict type="frameshift">
        <sequence resource="EMBL" id="M87049"/>
    </conflict>
</comment>
<comment type="sequence caution" evidence="1">
    <conflict type="frameshift">
        <sequence resource="EMBL" id="U00096"/>
    </conflict>
    <text>Produces two separate ORFs.</text>
</comment>
<feature type="chain" id="PRO_0000169646" description="Putative uncharacterized protein YifN">
    <location>
        <begin position="1"/>
        <end position="149"/>
    </location>
</feature>